<reference key="1">
    <citation type="journal article" date="2006" name="Proc. Natl. Acad. Sci. U.S.A.">
        <title>Molecular genetic anatomy of inter- and intraserotype variation in the human bacterial pathogen group A Streptococcus.</title>
        <authorList>
            <person name="Beres S.B."/>
            <person name="Richter E.W."/>
            <person name="Nagiec M.J."/>
            <person name="Sumby P."/>
            <person name="Porcella S.F."/>
            <person name="DeLeo F.R."/>
            <person name="Musser J.M."/>
        </authorList>
    </citation>
    <scope>NUCLEOTIDE SEQUENCE [LARGE SCALE GENOMIC DNA]</scope>
    <source>
        <strain>MGAS9429</strain>
    </source>
</reference>
<evidence type="ECO:0000255" key="1">
    <source>
        <dbReference type="HAMAP-Rule" id="MF_01343"/>
    </source>
</evidence>
<evidence type="ECO:0000305" key="2"/>
<comment type="function">
    <text evidence="1">One of the primary rRNA binding proteins, it binds directly to 16S rRNA where it helps nucleate assembly of the platform of the 30S subunit by binding and bridging several RNA helices of the 16S rRNA.</text>
</comment>
<comment type="function">
    <text evidence="1">Forms an intersubunit bridge (bridge B4) with the 23S rRNA of the 50S subunit in the ribosome.</text>
</comment>
<comment type="subunit">
    <text evidence="1">Part of the 30S ribosomal subunit. Forms a bridge to the 50S subunit in the 70S ribosome, contacting the 23S rRNA.</text>
</comment>
<comment type="similarity">
    <text evidence="1">Belongs to the universal ribosomal protein uS15 family.</text>
</comment>
<feature type="chain" id="PRO_0000255537" description="Small ribosomal subunit protein uS15">
    <location>
        <begin position="1"/>
        <end position="89"/>
    </location>
</feature>
<protein>
    <recommendedName>
        <fullName evidence="1">Small ribosomal subunit protein uS15</fullName>
    </recommendedName>
    <alternativeName>
        <fullName evidence="2">30S ribosomal protein S15</fullName>
    </alternativeName>
</protein>
<proteinExistence type="inferred from homology"/>
<name>RS15_STRPC</name>
<gene>
    <name evidence="1" type="primary">rpsO</name>
    <name type="ordered locus">MGAS9429_Spy1667</name>
</gene>
<dbReference type="EMBL" id="CP000259">
    <property type="protein sequence ID" value="ABF32854.1"/>
    <property type="molecule type" value="Genomic_DNA"/>
</dbReference>
<dbReference type="RefSeq" id="WP_002982634.1">
    <property type="nucleotide sequence ID" value="NC_008021.1"/>
</dbReference>
<dbReference type="SMR" id="Q1JJW9"/>
<dbReference type="KEGG" id="spk:MGAS9429_Spy1667"/>
<dbReference type="HOGENOM" id="CLU_148518_0_0_9"/>
<dbReference type="Proteomes" id="UP000002433">
    <property type="component" value="Chromosome"/>
</dbReference>
<dbReference type="GO" id="GO:0022627">
    <property type="term" value="C:cytosolic small ribosomal subunit"/>
    <property type="evidence" value="ECO:0007669"/>
    <property type="project" value="TreeGrafter"/>
</dbReference>
<dbReference type="GO" id="GO:0019843">
    <property type="term" value="F:rRNA binding"/>
    <property type="evidence" value="ECO:0007669"/>
    <property type="project" value="UniProtKB-UniRule"/>
</dbReference>
<dbReference type="GO" id="GO:0003735">
    <property type="term" value="F:structural constituent of ribosome"/>
    <property type="evidence" value="ECO:0007669"/>
    <property type="project" value="InterPro"/>
</dbReference>
<dbReference type="GO" id="GO:0006412">
    <property type="term" value="P:translation"/>
    <property type="evidence" value="ECO:0007669"/>
    <property type="project" value="UniProtKB-UniRule"/>
</dbReference>
<dbReference type="CDD" id="cd00353">
    <property type="entry name" value="Ribosomal_S15p_S13e"/>
    <property type="match status" value="1"/>
</dbReference>
<dbReference type="FunFam" id="1.10.287.10:FF:000002">
    <property type="entry name" value="30S ribosomal protein S15"/>
    <property type="match status" value="1"/>
</dbReference>
<dbReference type="Gene3D" id="6.10.250.3130">
    <property type="match status" value="1"/>
</dbReference>
<dbReference type="Gene3D" id="1.10.287.10">
    <property type="entry name" value="S15/NS1, RNA-binding"/>
    <property type="match status" value="1"/>
</dbReference>
<dbReference type="HAMAP" id="MF_01343_B">
    <property type="entry name" value="Ribosomal_uS15_B"/>
    <property type="match status" value="1"/>
</dbReference>
<dbReference type="InterPro" id="IPR000589">
    <property type="entry name" value="Ribosomal_uS15"/>
</dbReference>
<dbReference type="InterPro" id="IPR005290">
    <property type="entry name" value="Ribosomal_uS15_bac-type"/>
</dbReference>
<dbReference type="InterPro" id="IPR009068">
    <property type="entry name" value="uS15_NS1_RNA-bd_sf"/>
</dbReference>
<dbReference type="NCBIfam" id="TIGR00952">
    <property type="entry name" value="S15_bact"/>
    <property type="match status" value="1"/>
</dbReference>
<dbReference type="PANTHER" id="PTHR23321">
    <property type="entry name" value="RIBOSOMAL PROTEIN S15, BACTERIAL AND ORGANELLAR"/>
    <property type="match status" value="1"/>
</dbReference>
<dbReference type="PANTHER" id="PTHR23321:SF26">
    <property type="entry name" value="SMALL RIBOSOMAL SUBUNIT PROTEIN US15M"/>
    <property type="match status" value="1"/>
</dbReference>
<dbReference type="Pfam" id="PF00312">
    <property type="entry name" value="Ribosomal_S15"/>
    <property type="match status" value="1"/>
</dbReference>
<dbReference type="SMART" id="SM01387">
    <property type="entry name" value="Ribosomal_S15"/>
    <property type="match status" value="1"/>
</dbReference>
<dbReference type="SUPFAM" id="SSF47060">
    <property type="entry name" value="S15/NS1 RNA-binding domain"/>
    <property type="match status" value="1"/>
</dbReference>
<dbReference type="PROSITE" id="PS00362">
    <property type="entry name" value="RIBOSOMAL_S15"/>
    <property type="match status" value="1"/>
</dbReference>
<keyword id="KW-0687">Ribonucleoprotein</keyword>
<keyword id="KW-0689">Ribosomal protein</keyword>
<keyword id="KW-0694">RNA-binding</keyword>
<keyword id="KW-0699">rRNA-binding</keyword>
<accession>Q1JJW9</accession>
<organism>
    <name type="scientific">Streptococcus pyogenes serotype M12 (strain MGAS9429)</name>
    <dbReference type="NCBI Taxonomy" id="370551"/>
    <lineage>
        <taxon>Bacteria</taxon>
        <taxon>Bacillati</taxon>
        <taxon>Bacillota</taxon>
        <taxon>Bacilli</taxon>
        <taxon>Lactobacillales</taxon>
        <taxon>Streptococcaceae</taxon>
        <taxon>Streptococcus</taxon>
    </lineage>
</organism>
<sequence length="89" mass="10504">MAISKEKKNEIIAQYARHEGDTGSVEVQVAVLTWEINHLNSHIKEHKKDHATYRGLMKKIGHRRNLLAYLRRTDVNRYRELIQSLGLRR</sequence>